<reference key="1">
    <citation type="submission" date="2005-03" db="EMBL/GenBank/DDBJ databases">
        <title>Complete structure of the chloroplast genome of Populus alba.</title>
        <authorList>
            <person name="Okumura S."/>
            <person name="Yamashita A."/>
            <person name="Kanamoto H."/>
            <person name="Hattori M."/>
            <person name="Takase H."/>
            <person name="Tomizawa K."/>
        </authorList>
    </citation>
    <scope>NUCLEOTIDE SEQUENCE [LARGE SCALE GENOMIC DNA]</scope>
</reference>
<protein>
    <recommendedName>
        <fullName evidence="1">DNA-directed RNA polymerase subunit beta</fullName>
        <ecNumber evidence="1">2.7.7.6</ecNumber>
    </recommendedName>
    <alternativeName>
        <fullName evidence="1">PEP</fullName>
    </alternativeName>
    <alternativeName>
        <fullName evidence="1">Plastid-encoded RNA polymerase subunit beta</fullName>
        <shortName evidence="1">RNA polymerase subunit beta</shortName>
    </alternativeName>
</protein>
<keyword id="KW-0150">Chloroplast</keyword>
<keyword id="KW-0240">DNA-directed RNA polymerase</keyword>
<keyword id="KW-0548">Nucleotidyltransferase</keyword>
<keyword id="KW-0934">Plastid</keyword>
<keyword id="KW-0804">Transcription</keyword>
<keyword id="KW-0808">Transferase</keyword>
<geneLocation type="chloroplast"/>
<gene>
    <name evidence="1" type="primary">rpoB</name>
</gene>
<accession>Q14FG5</accession>
<proteinExistence type="inferred from homology"/>
<organism>
    <name type="scientific">Populus alba</name>
    <name type="common">White poplar</name>
    <dbReference type="NCBI Taxonomy" id="43335"/>
    <lineage>
        <taxon>Eukaryota</taxon>
        <taxon>Viridiplantae</taxon>
        <taxon>Streptophyta</taxon>
        <taxon>Embryophyta</taxon>
        <taxon>Tracheophyta</taxon>
        <taxon>Spermatophyta</taxon>
        <taxon>Magnoliopsida</taxon>
        <taxon>eudicotyledons</taxon>
        <taxon>Gunneridae</taxon>
        <taxon>Pentapetalae</taxon>
        <taxon>rosids</taxon>
        <taxon>fabids</taxon>
        <taxon>Malpighiales</taxon>
        <taxon>Salicaceae</taxon>
        <taxon>Saliceae</taxon>
        <taxon>Populus</taxon>
    </lineage>
</organism>
<feature type="chain" id="PRO_0000276596" description="DNA-directed RNA polymerase subunit beta">
    <location>
        <begin position="1"/>
        <end position="1070"/>
    </location>
</feature>
<sequence>MLGDGNGGMSTIPGFNQIQFEGFCRFIDQGLAEELYKFPKIEDRDQEIEFQLFVETYQLVEPSIKERDAVYESLTYSSELYVSGGLIWKNSRDMQEQTIFIGNIPLMNSLGTSIVNGIYRIVINQILQSPGIYYRSELNHNGISVYTGTIISDWGGRVELEIDKKARIWARVSRKQKISILVLSSAMGLNLREILENVCYPEIFLSFLSDKEKKKIGSRENAILEFYQQFTCVGGGPVFSESLCKELQKKFFQQRCELGRIGRLNMNQRLNLDIPHNNTFLLPRDILAAADHLIGMKFGMGTLDDMNHLKNKRIRSVADLLQDQFGLALIRLENVVRGTICGAIRHKLIPTPQNLVTSTPLTTTYESFFGLHPLSQVLDRTNPLTQIVHGRKSSYLGPGGLTGRTASFRIRDIHPSHYGRICPIDTSEGINVGLIGSLTIHAKIGHLGSLESPFYEISARSKKVRMLYLSPNRDEYYMIAAGNCLALNRGAREEQVVPARYRQEFLTIAWEQVRLRSFFPFQYFSIGASLIPFIEHNDANRALMSSNMQRQAVPLARSEKCIVGTGLERQVALDSGVPAIAEHEGKIIYTDIDKIILSGNGYTVSIPLVMYQRSNKNTCMHQKTQVQRGKCIKRGQVLADGAATVGGELALGKNILVAYMPWEGYNFEDAVLISERLVYEDVYTSFHIRKYEIQTHVTSQGPERITNEIPHLEAHLLRNLDKNGIVMLGSWVETGDILIGKLTPQLAKESSYAPEDRLLRAILGIQVSTSKETCLKLPTGGRGRVIDVRWIQKKGGSSYNPETIRVYILQKREIKVGDKVAGRHGNKGIISKILPRQDMPYLQDGGPVDMVFNPLGVPSRMNVGQIFECSLGLAGSLLARHYRVAPFDERYEQEASRKLVFSELYEAGKQTANPWVFEPECPGKSRIFDGRTGDPFEQPVIIGKPYILKLIHQVADKIHGRSSGHYALVTQQPLRGRAKQGGQRVGEMEVWALEGFGVSHILQEMLTYKSDHIRARQEVLGTTISGRTIPKPEDAPESFRLLVRELRSLALELKHFLISEKNFQINRKEV</sequence>
<evidence type="ECO:0000255" key="1">
    <source>
        <dbReference type="HAMAP-Rule" id="MF_01321"/>
    </source>
</evidence>
<comment type="function">
    <text evidence="1">DNA-dependent RNA polymerase catalyzes the transcription of DNA into RNA using the four ribonucleoside triphosphates as substrates.</text>
</comment>
<comment type="catalytic activity">
    <reaction evidence="1">
        <text>RNA(n) + a ribonucleoside 5'-triphosphate = RNA(n+1) + diphosphate</text>
        <dbReference type="Rhea" id="RHEA:21248"/>
        <dbReference type="Rhea" id="RHEA-COMP:14527"/>
        <dbReference type="Rhea" id="RHEA-COMP:17342"/>
        <dbReference type="ChEBI" id="CHEBI:33019"/>
        <dbReference type="ChEBI" id="CHEBI:61557"/>
        <dbReference type="ChEBI" id="CHEBI:140395"/>
        <dbReference type="EC" id="2.7.7.6"/>
    </reaction>
</comment>
<comment type="subunit">
    <text evidence="1">In plastids the minimal PEP RNA polymerase catalytic core is composed of four subunits: alpha, beta, beta', and beta''. When a (nuclear-encoded) sigma factor is associated with the core the holoenzyme is formed, which can initiate transcription.</text>
</comment>
<comment type="subcellular location">
    <subcellularLocation>
        <location>Plastid</location>
        <location>Chloroplast</location>
    </subcellularLocation>
</comment>
<comment type="similarity">
    <text evidence="1">Belongs to the RNA polymerase beta chain family.</text>
</comment>
<name>RPOB_POPAL</name>
<dbReference type="EC" id="2.7.7.6" evidence="1"/>
<dbReference type="EMBL" id="AP008956">
    <property type="protein sequence ID" value="BAE97197.1"/>
    <property type="molecule type" value="Genomic_DNA"/>
</dbReference>
<dbReference type="RefSeq" id="YP_665550.1">
    <property type="nucleotide sequence ID" value="NC_008235.1"/>
</dbReference>
<dbReference type="SMR" id="Q14FG5"/>
<dbReference type="GeneID" id="4178254"/>
<dbReference type="KEGG" id="palz:4178254"/>
<dbReference type="OrthoDB" id="1407at3646"/>
<dbReference type="GO" id="GO:0009507">
    <property type="term" value="C:chloroplast"/>
    <property type="evidence" value="ECO:0007669"/>
    <property type="project" value="UniProtKB-SubCell"/>
</dbReference>
<dbReference type="GO" id="GO:0000428">
    <property type="term" value="C:DNA-directed RNA polymerase complex"/>
    <property type="evidence" value="ECO:0007669"/>
    <property type="project" value="UniProtKB-KW"/>
</dbReference>
<dbReference type="GO" id="GO:0005739">
    <property type="term" value="C:mitochondrion"/>
    <property type="evidence" value="ECO:0007669"/>
    <property type="project" value="GOC"/>
</dbReference>
<dbReference type="GO" id="GO:0003677">
    <property type="term" value="F:DNA binding"/>
    <property type="evidence" value="ECO:0007669"/>
    <property type="project" value="UniProtKB-UniRule"/>
</dbReference>
<dbReference type="GO" id="GO:0003899">
    <property type="term" value="F:DNA-directed RNA polymerase activity"/>
    <property type="evidence" value="ECO:0007669"/>
    <property type="project" value="UniProtKB-UniRule"/>
</dbReference>
<dbReference type="GO" id="GO:0032549">
    <property type="term" value="F:ribonucleoside binding"/>
    <property type="evidence" value="ECO:0007669"/>
    <property type="project" value="InterPro"/>
</dbReference>
<dbReference type="GO" id="GO:0006351">
    <property type="term" value="P:DNA-templated transcription"/>
    <property type="evidence" value="ECO:0007669"/>
    <property type="project" value="UniProtKB-UniRule"/>
</dbReference>
<dbReference type="CDD" id="cd00653">
    <property type="entry name" value="RNA_pol_B_RPB2"/>
    <property type="match status" value="1"/>
</dbReference>
<dbReference type="FunFam" id="3.90.1110.10:FF:000009">
    <property type="entry name" value="DNA-directed RNA polymerase subunit beta"/>
    <property type="match status" value="1"/>
</dbReference>
<dbReference type="Gene3D" id="2.40.50.100">
    <property type="match status" value="1"/>
</dbReference>
<dbReference type="Gene3D" id="2.40.50.150">
    <property type="match status" value="1"/>
</dbReference>
<dbReference type="Gene3D" id="3.90.1100.10">
    <property type="match status" value="1"/>
</dbReference>
<dbReference type="Gene3D" id="2.30.150.10">
    <property type="entry name" value="DNA-directed RNA polymerase, beta subunit, external 1 domain"/>
    <property type="match status" value="1"/>
</dbReference>
<dbReference type="Gene3D" id="2.40.270.10">
    <property type="entry name" value="DNA-directed RNA polymerase, subunit 2, domain 6"/>
    <property type="match status" value="1"/>
</dbReference>
<dbReference type="Gene3D" id="3.90.1800.10">
    <property type="entry name" value="RNA polymerase alpha subunit dimerisation domain"/>
    <property type="match status" value="1"/>
</dbReference>
<dbReference type="Gene3D" id="3.90.1110.10">
    <property type="entry name" value="RNA polymerase Rpb2, domain 2"/>
    <property type="match status" value="1"/>
</dbReference>
<dbReference type="HAMAP" id="MF_01321">
    <property type="entry name" value="RNApol_bact_RpoB"/>
    <property type="match status" value="1"/>
</dbReference>
<dbReference type="InterPro" id="IPR042107">
    <property type="entry name" value="DNA-dir_RNA_pol_bsu_ext_1_sf"/>
</dbReference>
<dbReference type="InterPro" id="IPR015712">
    <property type="entry name" value="DNA-dir_RNA_pol_su2"/>
</dbReference>
<dbReference type="InterPro" id="IPR007120">
    <property type="entry name" value="DNA-dir_RNAP_su2_dom"/>
</dbReference>
<dbReference type="InterPro" id="IPR037033">
    <property type="entry name" value="DNA-dir_RNAP_su2_hyb_sf"/>
</dbReference>
<dbReference type="InterPro" id="IPR010243">
    <property type="entry name" value="RNA_pol_bsu_bac"/>
</dbReference>
<dbReference type="InterPro" id="IPR007121">
    <property type="entry name" value="RNA_pol_bsu_CS"/>
</dbReference>
<dbReference type="InterPro" id="IPR007642">
    <property type="entry name" value="RNA_pol_Rpb2_2"/>
</dbReference>
<dbReference type="InterPro" id="IPR037034">
    <property type="entry name" value="RNA_pol_Rpb2_2_sf"/>
</dbReference>
<dbReference type="InterPro" id="IPR007645">
    <property type="entry name" value="RNA_pol_Rpb2_3"/>
</dbReference>
<dbReference type="InterPro" id="IPR007641">
    <property type="entry name" value="RNA_pol_Rpb2_7"/>
</dbReference>
<dbReference type="InterPro" id="IPR014724">
    <property type="entry name" value="RNA_pol_RPB2_OB-fold"/>
</dbReference>
<dbReference type="NCBIfam" id="NF001616">
    <property type="entry name" value="PRK00405.1"/>
    <property type="match status" value="1"/>
</dbReference>
<dbReference type="PANTHER" id="PTHR20856">
    <property type="entry name" value="DNA-DIRECTED RNA POLYMERASE I SUBUNIT 2"/>
    <property type="match status" value="1"/>
</dbReference>
<dbReference type="Pfam" id="PF04561">
    <property type="entry name" value="RNA_pol_Rpb2_2"/>
    <property type="match status" value="1"/>
</dbReference>
<dbReference type="Pfam" id="PF04565">
    <property type="entry name" value="RNA_pol_Rpb2_3"/>
    <property type="match status" value="1"/>
</dbReference>
<dbReference type="Pfam" id="PF00562">
    <property type="entry name" value="RNA_pol_Rpb2_6"/>
    <property type="match status" value="1"/>
</dbReference>
<dbReference type="Pfam" id="PF04560">
    <property type="entry name" value="RNA_pol_Rpb2_7"/>
    <property type="match status" value="1"/>
</dbReference>
<dbReference type="SUPFAM" id="SSF64484">
    <property type="entry name" value="beta and beta-prime subunits of DNA dependent RNA-polymerase"/>
    <property type="match status" value="1"/>
</dbReference>
<dbReference type="PROSITE" id="PS01166">
    <property type="entry name" value="RNA_POL_BETA"/>
    <property type="match status" value="1"/>
</dbReference>